<dbReference type="SMR" id="C0HKI4"/>
<dbReference type="GO" id="GO:0006952">
    <property type="term" value="P:defense response"/>
    <property type="evidence" value="ECO:0007669"/>
    <property type="project" value="UniProtKB-KW"/>
</dbReference>
<dbReference type="InterPro" id="IPR005535">
    <property type="entry name" value="Cyclotide"/>
</dbReference>
<dbReference type="InterPro" id="IPR012324">
    <property type="entry name" value="Cyclotide_moebius_CS"/>
</dbReference>
<dbReference type="InterPro" id="IPR036146">
    <property type="entry name" value="Cyclotide_sf"/>
</dbReference>
<dbReference type="Pfam" id="PF03784">
    <property type="entry name" value="Cyclotide"/>
    <property type="match status" value="1"/>
</dbReference>
<dbReference type="SUPFAM" id="SSF57038">
    <property type="entry name" value="Cyclotides"/>
    <property type="match status" value="1"/>
</dbReference>
<dbReference type="PROSITE" id="PS51052">
    <property type="entry name" value="CYCLOTIDE"/>
    <property type="match status" value="1"/>
</dbReference>
<dbReference type="PROSITE" id="PS60009">
    <property type="entry name" value="CYCLOTIDE_MOEBIUS"/>
    <property type="match status" value="1"/>
</dbReference>
<feature type="peptide" id="PRO_0000441359" description="Cyclotide mden-A" evidence="2">
    <location>
        <begin position="1"/>
        <end position="29"/>
    </location>
</feature>
<feature type="disulfide bond" evidence="1">
    <location>
        <begin position="5"/>
        <end position="19"/>
    </location>
</feature>
<feature type="disulfide bond" evidence="1">
    <location>
        <begin position="9"/>
        <end position="21"/>
    </location>
</feature>
<feature type="disulfide bond" evidence="1">
    <location>
        <begin position="14"/>
        <end position="26"/>
    </location>
</feature>
<feature type="cross-link" description="Cyclopeptide (Gly-Asn)" evidence="3">
    <location>
        <begin position="1"/>
        <end position="29"/>
    </location>
</feature>
<proteinExistence type="evidence at protein level"/>
<sequence length="29" mass="2962">GIPTCGETCTLGTCNTPGCTCSWPICTKN</sequence>
<accession>C0HKI4</accession>
<name>CYMEA_MELDN</name>
<organism evidence="3">
    <name type="scientific">Melicytus dentatus</name>
    <name type="common">Tree violet</name>
    <dbReference type="NCBI Taxonomy" id="491106"/>
    <lineage>
        <taxon>Eukaryota</taxon>
        <taxon>Viridiplantae</taxon>
        <taxon>Streptophyta</taxon>
        <taxon>Embryophyta</taxon>
        <taxon>Tracheophyta</taxon>
        <taxon>Spermatophyta</taxon>
        <taxon>Magnoliopsida</taxon>
        <taxon>eudicotyledons</taxon>
        <taxon>Gunneridae</taxon>
        <taxon>Pentapetalae</taxon>
        <taxon>rosids</taxon>
        <taxon>fabids</taxon>
        <taxon>Malpighiales</taxon>
        <taxon>Violaceae</taxon>
        <taxon>Melicytus</taxon>
    </lineage>
</organism>
<reference evidence="4" key="1">
    <citation type="journal article" date="2017" name="J. Nat. Prod.">
        <title>Understanding the Diversity and Distribution of Cyclotides from Plants of Varied Genetic Origin.</title>
        <authorList>
            <person name="Ravipati A.S."/>
            <person name="Poth A.G."/>
            <person name="Troeira Henriques S."/>
            <person name="Bhandari M."/>
            <person name="Huang Y.H."/>
            <person name="Nino J."/>
            <person name="Colgrave M.L."/>
            <person name="Craik D.J."/>
        </authorList>
    </citation>
    <scope>PROTEIN SEQUENCE</scope>
</reference>
<keyword id="KW-0903">Direct protein sequencing</keyword>
<keyword id="KW-1015">Disulfide bond</keyword>
<keyword id="KW-0611">Plant defense</keyword>
<protein>
    <recommendedName>
        <fullName evidence="3">Cyclotide mden-A</fullName>
    </recommendedName>
</protein>
<evidence type="ECO:0000255" key="1">
    <source>
        <dbReference type="PROSITE-ProRule" id="PRU00395"/>
    </source>
</evidence>
<evidence type="ECO:0000269" key="2">
    <source>
    </source>
</evidence>
<evidence type="ECO:0000303" key="3">
    <source>
    </source>
</evidence>
<evidence type="ECO:0000305" key="4"/>
<comment type="function">
    <text evidence="1">Probably participates in a plant defense mechanism.</text>
</comment>
<comment type="domain">
    <text evidence="4">The presence of a 'disulfide through disulfide knot' structurally defines this protein as a knottin.</text>
</comment>
<comment type="PTM">
    <text evidence="1">This is a cyclic peptide.</text>
</comment>
<comment type="similarity">
    <text evidence="1">Belongs to the cyclotide family. Moebius subfamily.</text>
</comment>
<comment type="caution">
    <text evidence="1">This peptide is cyclic. The start position was chosen by similarity to Oak1 (kalata B1) for which the DNA sequence is known.</text>
</comment>